<keyword id="KW-1064">Adaptive immunity</keyword>
<keyword id="KW-1003">Cell membrane</keyword>
<keyword id="KW-1015">Disulfide bond</keyword>
<keyword id="KW-0391">Immunity</keyword>
<keyword id="KW-1280">Immunoglobulin</keyword>
<keyword id="KW-0393">Immunoglobulin domain</keyword>
<keyword id="KW-0472">Membrane</keyword>
<keyword id="KW-1267">Proteomics identification</keyword>
<keyword id="KW-1185">Reference proteome</keyword>
<keyword id="KW-0964">Secreted</keyword>
<keyword id="KW-0732">Signal</keyword>
<name>HV124_HUMAN</name>
<proteinExistence type="evidence at protein level"/>
<accession>A0A0C4DH33</accession>
<evidence type="ECO:0000250" key="1">
    <source>
        <dbReference type="UniProtKB" id="P23083"/>
    </source>
</evidence>
<evidence type="ECO:0000255" key="2"/>
<evidence type="ECO:0000255" key="3">
    <source>
        <dbReference type="PROSITE-ProRule" id="PRU00114"/>
    </source>
</evidence>
<evidence type="ECO:0000303" key="4">
    <source>
    </source>
</evidence>
<evidence type="ECO:0000303" key="5">
    <source>
    </source>
</evidence>
<evidence type="ECO:0000303" key="6">
    <source>
    </source>
</evidence>
<evidence type="ECO:0000303" key="7">
    <source>
    </source>
</evidence>
<evidence type="ECO:0000303" key="8">
    <source>
    </source>
</evidence>
<evidence type="ECO:0000303" key="9">
    <source ref="3"/>
</evidence>
<evidence type="ECO:0000305" key="10"/>
<organism>
    <name type="scientific">Homo sapiens</name>
    <name type="common">Human</name>
    <dbReference type="NCBI Taxonomy" id="9606"/>
    <lineage>
        <taxon>Eukaryota</taxon>
        <taxon>Metazoa</taxon>
        <taxon>Chordata</taxon>
        <taxon>Craniata</taxon>
        <taxon>Vertebrata</taxon>
        <taxon>Euteleostomi</taxon>
        <taxon>Mammalia</taxon>
        <taxon>Eutheria</taxon>
        <taxon>Euarchontoglires</taxon>
        <taxon>Primates</taxon>
        <taxon>Haplorrhini</taxon>
        <taxon>Catarrhini</taxon>
        <taxon>Hominidae</taxon>
        <taxon>Homo</taxon>
    </lineage>
</organism>
<sequence length="117" mass="12824">MDCTWRILFLVAAATGTHAQVQLVQSGAEVKKPGASVKVSCKVSGYTLTELSMHWVRQAPGKGLEWMGGFDPEDGETIYAQKFQGRVTMTEDTSTDTAYMELSSLRSEDTAVYYCAT</sequence>
<dbReference type="EMBL" id="AC245166">
    <property type="status" value="NOT_ANNOTATED_CDS"/>
    <property type="molecule type" value="Genomic_DNA"/>
</dbReference>
<dbReference type="SMR" id="A0A0C4DH33"/>
<dbReference type="FunCoup" id="A0A0C4DH33">
    <property type="interactions" value="298"/>
</dbReference>
<dbReference type="IMGT_GENE-DB" id="IGHV1-24"/>
<dbReference type="BioMuta" id="IGHV1-24"/>
<dbReference type="MassIVE" id="A0A0C4DH33"/>
<dbReference type="Ensembl" id="ENST00000390610.2">
    <property type="protein sequence ID" value="ENSP00000375019.2"/>
    <property type="gene ID" value="ENSG00000211950.2"/>
</dbReference>
<dbReference type="Ensembl" id="ENST00000633490.1">
    <property type="protein sequence ID" value="ENSP00000488412.1"/>
    <property type="gene ID" value="ENSG00000282284.1"/>
</dbReference>
<dbReference type="AGR" id="HGNC:5551"/>
<dbReference type="GeneCards" id="IGHV1-24"/>
<dbReference type="HGNC" id="HGNC:5551">
    <property type="gene designation" value="IGHV1-24"/>
</dbReference>
<dbReference type="HPA" id="ENSG00000211950">
    <property type="expression patterns" value="Tissue enhanced (cervix, esophagus, lymphoid tissue, urinary bladder)"/>
</dbReference>
<dbReference type="neXtProt" id="NX_A0A0C4DH33"/>
<dbReference type="OpenTargets" id="ENSG00000211950"/>
<dbReference type="VEuPathDB" id="HostDB:ENSG00000211950"/>
<dbReference type="GeneTree" id="ENSGT00950000183013"/>
<dbReference type="HOGENOM" id="CLU_077975_5_2_1"/>
<dbReference type="InParanoid" id="A0A0C4DH33"/>
<dbReference type="OMA" id="WMGGFDP"/>
<dbReference type="OrthoDB" id="9901223at2759"/>
<dbReference type="PAN-GO" id="A0A0C4DH33">
    <property type="GO annotations" value="11 GO annotations based on evolutionary models"/>
</dbReference>
<dbReference type="PhylomeDB" id="A0A0C4DH33"/>
<dbReference type="SignaLink" id="A0A0C4DH33"/>
<dbReference type="Pharos" id="A0A0C4DH33">
    <property type="development level" value="Tdark"/>
</dbReference>
<dbReference type="PRO" id="PR:A0A0C4DH33"/>
<dbReference type="Proteomes" id="UP000005640">
    <property type="component" value="Chromosome 14"/>
</dbReference>
<dbReference type="RNAct" id="A0A0C4DH33">
    <property type="molecule type" value="protein"/>
</dbReference>
<dbReference type="Bgee" id="ENSG00000211950">
    <property type="expression patterns" value="Expressed in rectum and 84 other cell types or tissues"/>
</dbReference>
<dbReference type="GO" id="GO:0005576">
    <property type="term" value="C:extracellular region"/>
    <property type="evidence" value="ECO:0007669"/>
    <property type="project" value="UniProtKB-SubCell"/>
</dbReference>
<dbReference type="GO" id="GO:0019814">
    <property type="term" value="C:immunoglobulin complex"/>
    <property type="evidence" value="ECO:0007669"/>
    <property type="project" value="UniProtKB-KW"/>
</dbReference>
<dbReference type="GO" id="GO:0005886">
    <property type="term" value="C:plasma membrane"/>
    <property type="evidence" value="ECO:0007669"/>
    <property type="project" value="UniProtKB-SubCell"/>
</dbReference>
<dbReference type="GO" id="GO:0003823">
    <property type="term" value="F:antigen binding"/>
    <property type="evidence" value="ECO:0000318"/>
    <property type="project" value="GO_Central"/>
</dbReference>
<dbReference type="GO" id="GO:0016064">
    <property type="term" value="P:immunoglobulin mediated immune response"/>
    <property type="evidence" value="ECO:0000318"/>
    <property type="project" value="GO_Central"/>
</dbReference>
<dbReference type="FunFam" id="2.60.40.10:FF:000556">
    <property type="entry name" value="Immunoglobulin heavy variable 7-81 (non-functional)"/>
    <property type="match status" value="1"/>
</dbReference>
<dbReference type="Gene3D" id="2.60.40.10">
    <property type="entry name" value="Immunoglobulins"/>
    <property type="match status" value="1"/>
</dbReference>
<dbReference type="InterPro" id="IPR007110">
    <property type="entry name" value="Ig-like_dom"/>
</dbReference>
<dbReference type="InterPro" id="IPR036179">
    <property type="entry name" value="Ig-like_dom_sf"/>
</dbReference>
<dbReference type="InterPro" id="IPR013783">
    <property type="entry name" value="Ig-like_fold"/>
</dbReference>
<dbReference type="InterPro" id="IPR013106">
    <property type="entry name" value="Ig_V-set"/>
</dbReference>
<dbReference type="InterPro" id="IPR050199">
    <property type="entry name" value="IgHV"/>
</dbReference>
<dbReference type="PANTHER" id="PTHR23266">
    <property type="entry name" value="IMMUNOGLOBULIN HEAVY CHAIN"/>
    <property type="match status" value="1"/>
</dbReference>
<dbReference type="Pfam" id="PF07686">
    <property type="entry name" value="V-set"/>
    <property type="match status" value="1"/>
</dbReference>
<dbReference type="SMART" id="SM00406">
    <property type="entry name" value="IGv"/>
    <property type="match status" value="1"/>
</dbReference>
<dbReference type="SUPFAM" id="SSF48726">
    <property type="entry name" value="Immunoglobulin"/>
    <property type="match status" value="1"/>
</dbReference>
<dbReference type="PROSITE" id="PS50835">
    <property type="entry name" value="IG_LIKE"/>
    <property type="match status" value="1"/>
</dbReference>
<gene>
    <name evidence="4 9" type="primary">IGHV1-24</name>
</gene>
<feature type="signal peptide" evidence="2">
    <location>
        <begin position="1"/>
        <end position="19"/>
    </location>
</feature>
<feature type="chain" id="PRO_5007392447" description="Immunoglobulin heavy variable 1-24" evidence="2">
    <location>
        <begin position="20"/>
        <end position="117"/>
    </location>
</feature>
<feature type="domain" description="Ig-like" evidence="3">
    <location>
        <begin position="20"/>
        <end position="117" status="greater than"/>
    </location>
</feature>
<feature type="region of interest" description="Framework-1" evidence="1">
    <location>
        <begin position="20"/>
        <end position="44"/>
    </location>
</feature>
<feature type="region of interest" description="Complementarity-determining-1" evidence="1">
    <location>
        <begin position="45"/>
        <end position="52"/>
    </location>
</feature>
<feature type="region of interest" description="Framework-2" evidence="1">
    <location>
        <begin position="53"/>
        <end position="69"/>
    </location>
</feature>
<feature type="region of interest" description="Complementarity-determining-2" evidence="1">
    <location>
        <begin position="70"/>
        <end position="77"/>
    </location>
</feature>
<feature type="region of interest" description="Framework-3" evidence="1">
    <location>
        <begin position="78"/>
        <end position="115"/>
    </location>
</feature>
<feature type="region of interest" description="Complementarity-determining-3" evidence="1">
    <location>
        <begin position="116"/>
        <end position="117" status="greater than"/>
    </location>
</feature>
<feature type="disulfide bond" evidence="3">
    <location>
        <begin position="41"/>
        <end position="115"/>
    </location>
</feature>
<feature type="non-terminal residue">
    <location>
        <position position="117"/>
    </location>
</feature>
<comment type="function">
    <text evidence="5 6 7 8">V region of the variable domain of immunoglobulin heavy chains that participates in the antigen recognition (PubMed:24600447). Immunoglobulins, also known as antibodies, are membrane-bound or secreted glycoproteins produced by B lymphocytes. In the recognition phase of humoral immunity, the membrane-bound immunoglobulins serve as receptors which, upon binding of a specific antigen, trigger the clonal expansion and differentiation of B lymphocytes into immunoglobulins-secreting plasma cells. Secreted immunoglobulins mediate the effector phase of humoral immunity, which results in the elimination of bound antigens (PubMed:20176268, PubMed:22158414). The antigen binding site is formed by the variable domain of one heavy chain, together with that of its associated light chain. Thus, each immunoglobulin has two antigen binding sites with remarkable affinity for a particular antigen. The variable domains are assembled by a process called V-(D)-J rearrangement and can then be subjected to somatic hypermutations which, after exposure to antigen and selection, allow affinity maturation for a particular antigen (PubMed:17576170, PubMed:20176268).</text>
</comment>
<comment type="subunit">
    <text evidence="6">Immunoglobulins are composed of two identical heavy chains and two identical light chains; disulfide-linked.</text>
</comment>
<comment type="subcellular location">
    <subcellularLocation>
        <location evidence="6 7">Secreted</location>
    </subcellularLocation>
    <subcellularLocation>
        <location evidence="6 7">Cell membrane</location>
    </subcellularLocation>
</comment>
<comment type="polymorphism">
    <text evidence="10">There are several alleles. The sequence shown is that of IMGT allele IGHV1-24*01.</text>
</comment>
<comment type="caution">
    <text evidence="10">For examples of full-length immunoglobulin heavy chains (of different isotypes) see AC P0DOX2, AC P0DOX3, AC P0DOX4, AC P0DOX5 and AC P0DOX6.</text>
</comment>
<protein>
    <recommendedName>
        <fullName evidence="4 9">Immunoglobulin heavy variable 1-24</fullName>
    </recommendedName>
</protein>
<reference key="1">
    <citation type="journal article" date="2003" name="Nature">
        <title>The DNA sequence and analysis of human chromosome 14.</title>
        <authorList>
            <person name="Heilig R."/>
            <person name="Eckenberg R."/>
            <person name="Petit J.-L."/>
            <person name="Fonknechten N."/>
            <person name="Da Silva C."/>
            <person name="Cattolico L."/>
            <person name="Levy M."/>
            <person name="Barbe V."/>
            <person name="De Berardinis V."/>
            <person name="Ureta-Vidal A."/>
            <person name="Pelletier E."/>
            <person name="Vico V."/>
            <person name="Anthouard V."/>
            <person name="Rowen L."/>
            <person name="Madan A."/>
            <person name="Qin S."/>
            <person name="Sun H."/>
            <person name="Du H."/>
            <person name="Pepin K."/>
            <person name="Artiguenave F."/>
            <person name="Robert C."/>
            <person name="Cruaud C."/>
            <person name="Bruels T."/>
            <person name="Jaillon O."/>
            <person name="Friedlander L."/>
            <person name="Samson G."/>
            <person name="Brottier P."/>
            <person name="Cure S."/>
            <person name="Segurens B."/>
            <person name="Aniere F."/>
            <person name="Samain S."/>
            <person name="Crespeau H."/>
            <person name="Abbasi N."/>
            <person name="Aiach N."/>
            <person name="Boscus D."/>
            <person name="Dickhoff R."/>
            <person name="Dors M."/>
            <person name="Dubois I."/>
            <person name="Friedman C."/>
            <person name="Gouyvenoux M."/>
            <person name="James R."/>
            <person name="Madan A."/>
            <person name="Mairey-Estrada B."/>
            <person name="Mangenot S."/>
            <person name="Martins N."/>
            <person name="Menard M."/>
            <person name="Oztas S."/>
            <person name="Ratcliffe A."/>
            <person name="Shaffer T."/>
            <person name="Trask B."/>
            <person name="Vacherie B."/>
            <person name="Bellemere C."/>
            <person name="Belser C."/>
            <person name="Besnard-Gonnet M."/>
            <person name="Bartol-Mavel D."/>
            <person name="Boutard M."/>
            <person name="Briez-Silla S."/>
            <person name="Combette S."/>
            <person name="Dufosse-Laurent V."/>
            <person name="Ferron C."/>
            <person name="Lechaplais C."/>
            <person name="Louesse C."/>
            <person name="Muselet D."/>
            <person name="Magdelenat G."/>
            <person name="Pateau E."/>
            <person name="Petit E."/>
            <person name="Sirvain-Trukniewicz P."/>
            <person name="Trybou A."/>
            <person name="Vega-Czarny N."/>
            <person name="Bataille E."/>
            <person name="Bluet E."/>
            <person name="Bordelais I."/>
            <person name="Dubois M."/>
            <person name="Dumont C."/>
            <person name="Guerin T."/>
            <person name="Haffray S."/>
            <person name="Hammadi R."/>
            <person name="Muanga J."/>
            <person name="Pellouin V."/>
            <person name="Robert D."/>
            <person name="Wunderle E."/>
            <person name="Gauguet G."/>
            <person name="Roy A."/>
            <person name="Sainte-Marthe L."/>
            <person name="Verdier J."/>
            <person name="Verdier-Discala C."/>
            <person name="Hillier L.W."/>
            <person name="Fulton L."/>
            <person name="McPherson J."/>
            <person name="Matsuda F."/>
            <person name="Wilson R."/>
            <person name="Scarpelli C."/>
            <person name="Gyapay G."/>
            <person name="Wincker P."/>
            <person name="Saurin W."/>
            <person name="Quetier F."/>
            <person name="Waterston R."/>
            <person name="Hood L."/>
            <person name="Weissenbach J."/>
        </authorList>
    </citation>
    <scope>NUCLEOTIDE SEQUENCE [LARGE SCALE GENOMIC DNA] (IMGT ALLELE IGHV1-24*01)</scope>
</reference>
<reference key="2">
    <citation type="journal article" date="2001" name="Exp. Clin. Immunogenet.">
        <title>Nomenclature of the human immunoglobulin heavy (IGH) genes.</title>
        <authorList>
            <person name="Lefranc M.P."/>
        </authorList>
    </citation>
    <scope>NOMENCLATURE</scope>
</reference>
<reference key="3">
    <citation type="book" date="2001" name="The Immunoglobulin FactsBook.">
        <title>The Immunoglobulin FactsBook.</title>
        <editorList>
            <person name="Lefranc M.P."/>
            <person name="Lefranc G."/>
        </editorList>
        <authorList>
            <person name="Lefranc M.P."/>
            <person name="Lefranc G."/>
        </authorList>
    </citation>
    <scope>NOMENCLATURE</scope>
</reference>
<reference key="4">
    <citation type="journal article" date="2007" name="Annu. Rev. Genet.">
        <title>Immunoglobulin somatic hypermutation.</title>
        <authorList>
            <person name="Teng G."/>
            <person name="Papavasiliou F.N."/>
        </authorList>
    </citation>
    <scope>REVIEW ON SOMATIC HYPERMUTATION</scope>
</reference>
<reference key="5">
    <citation type="journal article" date="2010" name="J. Allergy Clin. Immunol.">
        <title>Structure and function of immunoglobulins.</title>
        <authorList>
            <person name="Schroeder H.W. Jr."/>
            <person name="Cavacini L."/>
        </authorList>
    </citation>
    <scope>REVIEW ON IMMUNOGLOBULINS</scope>
</reference>
<reference key="6">
    <citation type="journal article" date="2012" name="Nat. Rev. Immunol.">
        <title>Molecular programming of B cell memory.</title>
        <authorList>
            <person name="McHeyzer-Williams M."/>
            <person name="Okitsu S."/>
            <person name="Wang N."/>
            <person name="McHeyzer-Williams L."/>
        </authorList>
    </citation>
    <scope>REVIEW ON FUNCTION</scope>
</reference>
<reference key="7">
    <citation type="journal article" date="2014" name="Front. Immunol.">
        <title>Immunoglobulin and T Cell Receptor Genes: IMGT((R)) and the Birth and Rise of Immunoinformatics.</title>
        <authorList>
            <person name="Lefranc M.P."/>
        </authorList>
    </citation>
    <scope>NOMENCLATURE</scope>
</reference>